<accession>Q2YQR6</accession>
<gene>
    <name evidence="1" type="primary">rbfA</name>
    <name type="ordered locus">BAB1_2166</name>
</gene>
<feature type="chain" id="PRO_1000000078" description="Ribosome-binding factor A">
    <location>
        <begin position="1"/>
        <end position="150"/>
    </location>
</feature>
<feature type="region of interest" description="Disordered" evidence="2">
    <location>
        <begin position="126"/>
        <end position="150"/>
    </location>
</feature>
<dbReference type="EMBL" id="AM040264">
    <property type="protein sequence ID" value="CAJ12122.1"/>
    <property type="molecule type" value="Genomic_DNA"/>
</dbReference>
<dbReference type="RefSeq" id="WP_002965228.1">
    <property type="nucleotide sequence ID" value="NZ_KN046823.1"/>
</dbReference>
<dbReference type="SMR" id="Q2YQR6"/>
<dbReference type="STRING" id="359391.BAB1_2166"/>
<dbReference type="GeneID" id="97534581"/>
<dbReference type="KEGG" id="bmf:BAB1_2166"/>
<dbReference type="PATRIC" id="fig|359391.11.peg.1403"/>
<dbReference type="HOGENOM" id="CLU_089475_1_0_5"/>
<dbReference type="Proteomes" id="UP000002719">
    <property type="component" value="Chromosome I"/>
</dbReference>
<dbReference type="GO" id="GO:0005829">
    <property type="term" value="C:cytosol"/>
    <property type="evidence" value="ECO:0007669"/>
    <property type="project" value="TreeGrafter"/>
</dbReference>
<dbReference type="GO" id="GO:0043024">
    <property type="term" value="F:ribosomal small subunit binding"/>
    <property type="evidence" value="ECO:0007669"/>
    <property type="project" value="TreeGrafter"/>
</dbReference>
<dbReference type="GO" id="GO:0030490">
    <property type="term" value="P:maturation of SSU-rRNA"/>
    <property type="evidence" value="ECO:0007669"/>
    <property type="project" value="UniProtKB-UniRule"/>
</dbReference>
<dbReference type="Gene3D" id="3.30.300.20">
    <property type="match status" value="1"/>
</dbReference>
<dbReference type="HAMAP" id="MF_00003">
    <property type="entry name" value="RbfA"/>
    <property type="match status" value="1"/>
</dbReference>
<dbReference type="InterPro" id="IPR015946">
    <property type="entry name" value="KH_dom-like_a/b"/>
</dbReference>
<dbReference type="InterPro" id="IPR000238">
    <property type="entry name" value="RbfA"/>
</dbReference>
<dbReference type="InterPro" id="IPR023799">
    <property type="entry name" value="RbfA_dom_sf"/>
</dbReference>
<dbReference type="InterPro" id="IPR020053">
    <property type="entry name" value="Ribosome-bd_factorA_CS"/>
</dbReference>
<dbReference type="NCBIfam" id="NF001802">
    <property type="entry name" value="PRK00521.2-5"/>
    <property type="match status" value="1"/>
</dbReference>
<dbReference type="NCBIfam" id="TIGR00082">
    <property type="entry name" value="rbfA"/>
    <property type="match status" value="1"/>
</dbReference>
<dbReference type="PANTHER" id="PTHR33515">
    <property type="entry name" value="RIBOSOME-BINDING FACTOR A, CHLOROPLASTIC-RELATED"/>
    <property type="match status" value="1"/>
</dbReference>
<dbReference type="PANTHER" id="PTHR33515:SF1">
    <property type="entry name" value="RIBOSOME-BINDING FACTOR A, CHLOROPLASTIC-RELATED"/>
    <property type="match status" value="1"/>
</dbReference>
<dbReference type="Pfam" id="PF02033">
    <property type="entry name" value="RBFA"/>
    <property type="match status" value="1"/>
</dbReference>
<dbReference type="SUPFAM" id="SSF89919">
    <property type="entry name" value="Ribosome-binding factor A, RbfA"/>
    <property type="match status" value="1"/>
</dbReference>
<dbReference type="PROSITE" id="PS01319">
    <property type="entry name" value="RBFA"/>
    <property type="match status" value="1"/>
</dbReference>
<proteinExistence type="inferred from homology"/>
<reference key="1">
    <citation type="journal article" date="2005" name="Infect. Immun.">
        <title>Whole-genome analyses of speciation events in pathogenic Brucellae.</title>
        <authorList>
            <person name="Chain P.S."/>
            <person name="Comerci D.J."/>
            <person name="Tolmasky M.E."/>
            <person name="Larimer F.W."/>
            <person name="Malfatti S.A."/>
            <person name="Vergez L.M."/>
            <person name="Aguero F."/>
            <person name="Land M.L."/>
            <person name="Ugalde R.A."/>
            <person name="Garcia E."/>
        </authorList>
    </citation>
    <scope>NUCLEOTIDE SEQUENCE [LARGE SCALE GENOMIC DNA]</scope>
    <source>
        <strain>2308</strain>
    </source>
</reference>
<name>RBFA_BRUA2</name>
<sequence length="150" mass="16573">MARSHDTKGSGGLSQRQLRVGEQVRHALAQVLQRGEIRDDLIERTVISVSEVRMSPDLKIATCFITPLGSADPQAVIKALASHAKFIRGRVAPSLAQMKYMPEFRFRPDTSFDNFSKIDALLRSPEVARDLSHDDDEDGGADEAPRNGDE</sequence>
<protein>
    <recommendedName>
        <fullName evidence="1">Ribosome-binding factor A</fullName>
    </recommendedName>
</protein>
<evidence type="ECO:0000255" key="1">
    <source>
        <dbReference type="HAMAP-Rule" id="MF_00003"/>
    </source>
</evidence>
<evidence type="ECO:0000256" key="2">
    <source>
        <dbReference type="SAM" id="MobiDB-lite"/>
    </source>
</evidence>
<keyword id="KW-0963">Cytoplasm</keyword>
<keyword id="KW-1185">Reference proteome</keyword>
<keyword id="KW-0690">Ribosome biogenesis</keyword>
<comment type="function">
    <text evidence="1">One of several proteins that assist in the late maturation steps of the functional core of the 30S ribosomal subunit. Associates with free 30S ribosomal subunits (but not with 30S subunits that are part of 70S ribosomes or polysomes). Required for efficient processing of 16S rRNA. May interact with the 5'-terminal helix region of 16S rRNA.</text>
</comment>
<comment type="subunit">
    <text evidence="1">Monomer. Binds 30S ribosomal subunits, but not 50S ribosomal subunits or 70S ribosomes.</text>
</comment>
<comment type="subcellular location">
    <subcellularLocation>
        <location evidence="1">Cytoplasm</location>
    </subcellularLocation>
</comment>
<comment type="similarity">
    <text evidence="1">Belongs to the RbfA family.</text>
</comment>
<organism>
    <name type="scientific">Brucella abortus (strain 2308)</name>
    <dbReference type="NCBI Taxonomy" id="359391"/>
    <lineage>
        <taxon>Bacteria</taxon>
        <taxon>Pseudomonadati</taxon>
        <taxon>Pseudomonadota</taxon>
        <taxon>Alphaproteobacteria</taxon>
        <taxon>Hyphomicrobiales</taxon>
        <taxon>Brucellaceae</taxon>
        <taxon>Brucella/Ochrobactrum group</taxon>
        <taxon>Brucella</taxon>
    </lineage>
</organism>